<accession>Q6CQ63</accession>
<reference key="1">
    <citation type="journal article" date="2004" name="Nature">
        <title>Genome evolution in yeasts.</title>
        <authorList>
            <person name="Dujon B."/>
            <person name="Sherman D."/>
            <person name="Fischer G."/>
            <person name="Durrens P."/>
            <person name="Casaregola S."/>
            <person name="Lafontaine I."/>
            <person name="de Montigny J."/>
            <person name="Marck C."/>
            <person name="Neuveglise C."/>
            <person name="Talla E."/>
            <person name="Goffard N."/>
            <person name="Frangeul L."/>
            <person name="Aigle M."/>
            <person name="Anthouard V."/>
            <person name="Babour A."/>
            <person name="Barbe V."/>
            <person name="Barnay S."/>
            <person name="Blanchin S."/>
            <person name="Beckerich J.-M."/>
            <person name="Beyne E."/>
            <person name="Bleykasten C."/>
            <person name="Boisrame A."/>
            <person name="Boyer J."/>
            <person name="Cattolico L."/>
            <person name="Confanioleri F."/>
            <person name="de Daruvar A."/>
            <person name="Despons L."/>
            <person name="Fabre E."/>
            <person name="Fairhead C."/>
            <person name="Ferry-Dumazet H."/>
            <person name="Groppi A."/>
            <person name="Hantraye F."/>
            <person name="Hennequin C."/>
            <person name="Jauniaux N."/>
            <person name="Joyet P."/>
            <person name="Kachouri R."/>
            <person name="Kerrest A."/>
            <person name="Koszul R."/>
            <person name="Lemaire M."/>
            <person name="Lesur I."/>
            <person name="Ma L."/>
            <person name="Muller H."/>
            <person name="Nicaud J.-M."/>
            <person name="Nikolski M."/>
            <person name="Oztas S."/>
            <person name="Ozier-Kalogeropoulos O."/>
            <person name="Pellenz S."/>
            <person name="Potier S."/>
            <person name="Richard G.-F."/>
            <person name="Straub M.-L."/>
            <person name="Suleau A."/>
            <person name="Swennen D."/>
            <person name="Tekaia F."/>
            <person name="Wesolowski-Louvel M."/>
            <person name="Westhof E."/>
            <person name="Wirth B."/>
            <person name="Zeniou-Meyer M."/>
            <person name="Zivanovic Y."/>
            <person name="Bolotin-Fukuhara M."/>
            <person name="Thierry A."/>
            <person name="Bouchier C."/>
            <person name="Caudron B."/>
            <person name="Scarpelli C."/>
            <person name="Gaillardin C."/>
            <person name="Weissenbach J."/>
            <person name="Wincker P."/>
            <person name="Souciet J.-L."/>
        </authorList>
    </citation>
    <scope>NUCLEOTIDE SEQUENCE [LARGE SCALE GENOMIC DNA]</scope>
    <source>
        <strain>ATCC 8585 / CBS 2359 / DSM 70799 / NBRC 1267 / NRRL Y-1140 / WM37</strain>
    </source>
</reference>
<proteinExistence type="inferred from homology"/>
<keyword id="KW-1185">Reference proteome</keyword>
<keyword id="KW-0732">Signal</keyword>
<sequence length="419" mass="48228">MLPPFIVAGLFSSYILIMGLMFSQISHVSNSNASVSSAAKSLESLRVKRDLIGLSGKELLKYFKTNLPTISSNSVFANLDHPLGVTKVSQLYDAFHDYLFGEDQRPIVQKLTQDVTIIPNVHSHNDYWRSLPLFEALMYGVTSVEADVWLTENNTSLSVSHDTRHIDPKHKSLDILYTQPLLEMLNHVNGPQNYHHSDVKEIFDEQDNKMHGVFYGDSSRSLQLLIDFKSENNEKTYELLMSKYLKPFIQRNYLTYLDLTTNEIIRGPLTIVLTGNYPIKESILDYESEDATSESNNHELNKGYFRDNKRYVFLDLPLHKQQLLAKLPTSVLSSASLSQLLTKCQSSLMLLKLRGHLSDDELKCIKKYINHAKEYHLATRIWGIPDWPISTRNRLWKQQFYDLNVDYINTDDLKDIANF</sequence>
<dbReference type="EMBL" id="CR382124">
    <property type="protein sequence ID" value="CAH01022.1"/>
    <property type="molecule type" value="Genomic_DNA"/>
</dbReference>
<dbReference type="RefSeq" id="XP_453926.1">
    <property type="nucleotide sequence ID" value="XM_453926.1"/>
</dbReference>
<dbReference type="FunCoup" id="Q6CQ63">
    <property type="interactions" value="18"/>
</dbReference>
<dbReference type="PaxDb" id="284590-Q6CQ63"/>
<dbReference type="KEGG" id="kla:KLLA0_D19470g"/>
<dbReference type="eggNOG" id="ENOG502QVA8">
    <property type="taxonomic scope" value="Eukaryota"/>
</dbReference>
<dbReference type="HOGENOM" id="CLU_031561_1_1_1"/>
<dbReference type="InParanoid" id="Q6CQ63"/>
<dbReference type="OMA" id="FTANNSY"/>
<dbReference type="Proteomes" id="UP000000598">
    <property type="component" value="Chromosome D"/>
</dbReference>
<dbReference type="GO" id="GO:0008081">
    <property type="term" value="F:phosphoric diester hydrolase activity"/>
    <property type="evidence" value="ECO:0007669"/>
    <property type="project" value="InterPro"/>
</dbReference>
<dbReference type="GO" id="GO:0006629">
    <property type="term" value="P:lipid metabolic process"/>
    <property type="evidence" value="ECO:0007669"/>
    <property type="project" value="InterPro"/>
</dbReference>
<dbReference type="InterPro" id="IPR051236">
    <property type="entry name" value="HAT_RTT109-like"/>
</dbReference>
<dbReference type="InterPro" id="IPR017946">
    <property type="entry name" value="PLC-like_Pdiesterase_TIM-brl"/>
</dbReference>
<dbReference type="PANTHER" id="PTHR31571">
    <property type="entry name" value="ALTERED INHERITANCE OF MITOCHONDRIA PROTEIN 6"/>
    <property type="match status" value="1"/>
</dbReference>
<dbReference type="PANTHER" id="PTHR31571:SF1">
    <property type="entry name" value="ALTERED INHERITANCE OF MITOCHONDRIA PROTEIN 6"/>
    <property type="match status" value="1"/>
</dbReference>
<dbReference type="SUPFAM" id="SSF51695">
    <property type="entry name" value="PLC-like phosphodiesterases"/>
    <property type="match status" value="1"/>
</dbReference>
<name>AIM6_KLULA</name>
<feature type="signal peptide" evidence="1">
    <location>
        <begin position="1"/>
        <end position="31"/>
    </location>
</feature>
<feature type="chain" id="PRO_0000408707" description="Altered inheritance of mitochondria protein 6">
    <location>
        <begin position="32"/>
        <end position="419"/>
    </location>
</feature>
<evidence type="ECO:0000255" key="1"/>
<evidence type="ECO:0000305" key="2"/>
<gene>
    <name type="primary">AIM6</name>
    <name type="ordered locus">KLLA0D19470g</name>
</gene>
<comment type="similarity">
    <text evidence="2">Belongs to the AIM6 family.</text>
</comment>
<organism>
    <name type="scientific">Kluyveromyces lactis (strain ATCC 8585 / CBS 2359 / DSM 70799 / NBRC 1267 / NRRL Y-1140 / WM37)</name>
    <name type="common">Yeast</name>
    <name type="synonym">Candida sphaerica</name>
    <dbReference type="NCBI Taxonomy" id="284590"/>
    <lineage>
        <taxon>Eukaryota</taxon>
        <taxon>Fungi</taxon>
        <taxon>Dikarya</taxon>
        <taxon>Ascomycota</taxon>
        <taxon>Saccharomycotina</taxon>
        <taxon>Saccharomycetes</taxon>
        <taxon>Saccharomycetales</taxon>
        <taxon>Saccharomycetaceae</taxon>
        <taxon>Kluyveromyces</taxon>
    </lineage>
</organism>
<protein>
    <recommendedName>
        <fullName>Altered inheritance of mitochondria protein 6</fullName>
    </recommendedName>
</protein>